<feature type="chain" id="PRO_5000064781" description="Helper component proteinase" evidence="1">
    <location>
        <begin position="1"/>
        <end position="255"/>
    </location>
</feature>
<feature type="chain" id="PRO_5000064782" description="70 kDa protein">
    <location>
        <begin position="256"/>
        <end position="890"/>
    </location>
</feature>
<feature type="domain" description="Peptidase C6" evidence="2">
    <location>
        <begin position="135"/>
        <end position="255"/>
    </location>
</feature>
<feature type="region of interest" description="Disordered" evidence="3">
    <location>
        <begin position="506"/>
        <end position="533"/>
    </location>
</feature>
<feature type="coiled-coil region" evidence="1">
    <location>
        <begin position="788"/>
        <end position="816"/>
    </location>
</feature>
<feature type="compositionally biased region" description="Pro residues" evidence="3">
    <location>
        <begin position="515"/>
        <end position="528"/>
    </location>
</feature>
<feature type="active site" description="For helper component proteinase activity" evidence="2">
    <location>
        <position position="143"/>
    </location>
</feature>
<feature type="active site" description="For helper component proteinase activity" evidence="2">
    <location>
        <position position="215"/>
    </location>
</feature>
<feature type="site" description="Cleavage; by autolysis" evidence="2">
    <location>
        <begin position="255"/>
        <end position="256"/>
    </location>
</feature>
<dbReference type="EC" id="3.4.22.45"/>
<dbReference type="EMBL" id="AJ132269">
    <property type="protein sequence ID" value="CAA10638.1"/>
    <property type="molecule type" value="Genomic_RNA"/>
</dbReference>
<dbReference type="RefSeq" id="NP_149000.1">
    <property type="nucleotide sequence ID" value="NC_002991.1"/>
</dbReference>
<dbReference type="SMR" id="Q9YJW2"/>
<dbReference type="MEROPS" id="C06.002"/>
<dbReference type="GeneID" id="963862"/>
<dbReference type="KEGG" id="vg:963862"/>
<dbReference type="Proteomes" id="UP000006704">
    <property type="component" value="Genome"/>
</dbReference>
<dbReference type="GO" id="GO:0004197">
    <property type="term" value="F:cysteine-type endopeptidase activity"/>
    <property type="evidence" value="ECO:0007669"/>
    <property type="project" value="InterPro"/>
</dbReference>
<dbReference type="GO" id="GO:0005198">
    <property type="term" value="F:structural molecule activity"/>
    <property type="evidence" value="ECO:0007669"/>
    <property type="project" value="InterPro"/>
</dbReference>
<dbReference type="GO" id="GO:0006508">
    <property type="term" value="P:proteolysis"/>
    <property type="evidence" value="ECO:0007669"/>
    <property type="project" value="UniProtKB-KW"/>
</dbReference>
<dbReference type="Gene3D" id="3.90.70.150">
    <property type="entry name" value="Helper component proteinase"/>
    <property type="match status" value="1"/>
</dbReference>
<dbReference type="Gene3D" id="1.20.120.70">
    <property type="entry name" value="Tobacco mosaic virus-like, coat protein"/>
    <property type="match status" value="1"/>
</dbReference>
<dbReference type="InterPro" id="IPR001456">
    <property type="entry name" value="HC-pro"/>
</dbReference>
<dbReference type="InterPro" id="IPR031159">
    <property type="entry name" value="HC_PRO_CPD_dom"/>
</dbReference>
<dbReference type="InterPro" id="IPR042308">
    <property type="entry name" value="HC_PRO_CPD_sf"/>
</dbReference>
<dbReference type="InterPro" id="IPR001337">
    <property type="entry name" value="TMV-like_coat"/>
</dbReference>
<dbReference type="InterPro" id="IPR036417">
    <property type="entry name" value="TMV-like_coat_sf"/>
</dbReference>
<dbReference type="Pfam" id="PF00851">
    <property type="entry name" value="Peptidase_C6"/>
    <property type="match status" value="1"/>
</dbReference>
<dbReference type="Pfam" id="PF00721">
    <property type="entry name" value="TMV_coat"/>
    <property type="match status" value="1"/>
</dbReference>
<dbReference type="SUPFAM" id="SSF47195">
    <property type="entry name" value="TMV-like viral coat proteins"/>
    <property type="match status" value="1"/>
</dbReference>
<dbReference type="PROSITE" id="PS51744">
    <property type="entry name" value="HC_PRO_CPD"/>
    <property type="match status" value="1"/>
</dbReference>
<accession>Q9YJW2</accession>
<comment type="catalytic activity">
    <reaction>
        <text>Hydrolyzes a Gly-|-Gly bond at its own C-terminus, commonly in the sequence -Tyr-Xaa-Val-Gly-|-Gly, in the processing of the potyviral polyprotein.</text>
        <dbReference type="EC" id="3.4.22.45"/>
    </reaction>
</comment>
<comment type="PTM">
    <text evidence="4">The viral RNA2 of bymoviruses is expressed as a single polyprotein which undergoes post-translational proteolytic processing resulting in the production of at least two individual proteins. The HC-pro cleaves its C-terminus autocatalytically (Potential).</text>
</comment>
<comment type="similarity">
    <text evidence="4">Belongs to the bymoviruses polyprotein 2 family.</text>
</comment>
<name>POL2_BAYMY</name>
<reference key="1">
    <citation type="journal article" date="1999" name="Virus Res.">
        <title>Molecular analysis of barley yellow mosaic virus isolates from China.</title>
        <authorList>
            <person name="Chen J."/>
            <person name="Shi N."/>
            <person name="Chen Y."/>
            <person name="Diao A."/>
            <person name="Chen D."/>
            <person name="Wilson M.A."/>
            <person name="Antoniw J.F."/>
            <person name="Adams M.J."/>
        </authorList>
    </citation>
    <scope>NUCLEOTIDE SEQUENCE [GENOMIC RNA]</scope>
</reference>
<proteinExistence type="inferred from homology"/>
<protein>
    <recommendedName>
        <fullName>Genome polyprotein 2</fullName>
    </recommendedName>
    <component>
        <recommendedName>
            <fullName>Helper component proteinase</fullName>
            <shortName>HC-pro</shortName>
            <ecNumber>3.4.22.45</ecNumber>
        </recommendedName>
    </component>
    <component>
        <recommendedName>
            <fullName>70 kDa protein</fullName>
        </recommendedName>
    </component>
</protein>
<keyword id="KW-0175">Coiled coil</keyword>
<keyword id="KW-0378">Hydrolase</keyword>
<keyword id="KW-0645">Protease</keyword>
<keyword id="KW-1185">Reference proteome</keyword>
<keyword id="KW-0788">Thiol protease</keyword>
<organismHost>
    <name type="scientific">Hordeum vulgare</name>
    <name type="common">Barley</name>
    <dbReference type="NCBI Taxonomy" id="4513"/>
</organismHost>
<sequence length="890" mass="98247">MSASSSRLLFDCGSLDWPNKSLFGDPTTRDVMNEHISSTWNAVIRRHMLAPNANAETILGRDGLPSAQFDAYGAMLPSFIQALNAPTTRLRISAPLSTAESILCADASHAPWLYMANSVCAYEATHLQPVQTFIAFNFAHGYCYLSLFIPLSFRITFENARGFSRFLEQLPDILGAYPTLAAIYKTMLFAIRLFPEVLQAPIPIIAKRPGVLQFHVSDARGLPPSWFPMKCGSVASFVALITNNLNSDLLNGIVGSNGDGEHYTNWNSGHDHWIVNRFITVKDLHSSLKSALEVDLDTEGGRNAVLDLLLDLGVTNLVRREKRFPAYFQGAESVYLLLSCERVGNELVAVQDALQEPLANYSGLDLRALIINLGGLPSRHSDICYTRNIFENDNHLVWNFEFYRIASITKNAQIDRDVLSSSMANLFSDFVSESSNGQYRVKEPRPVVQYRVEHDEPVASSAPSAWWQVLIGITTAILGAIIFFLWRCFLRAKRVKFQAKDSFPWFTTSGDDDSPPPPGDSPSRPPGRSPDRVLPRTVVRDLSFNDDDDLHSVDLNEAGSRFGEVVSLIARGNLRELAGAIPESLSNLTLLQTSASGSGFYTMVALYLATLGDAITAFHEHNDASPATIQSLRTLELQLEARGLRFNEAGTPANLIQRGVNSSVGRALVRLTQSALLATGENFRTRMATTLERIAAERLNTLTAYDQRVIEMTTELLAAIKPVLEVERSELTPHLANAEALLQVYNNLFSTDYVSASLLALRREMILRSAEGRVGEQPTSASDAANEELVQRSMTKLDKEIELFQAQIDSQRRAVTITEASNLRENILQPINTVANIAMAGAFLRGGARHRMPGMPDVATPMPNPFRAFSGRGHSLTTTRSGGLFRRPRV</sequence>
<evidence type="ECO:0000255" key="1"/>
<evidence type="ECO:0000255" key="2">
    <source>
        <dbReference type="PROSITE-ProRule" id="PRU01080"/>
    </source>
</evidence>
<evidence type="ECO:0000256" key="3">
    <source>
        <dbReference type="SAM" id="MobiDB-lite"/>
    </source>
</evidence>
<evidence type="ECO:0000305" key="4"/>
<organism>
    <name type="scientific">Barley yellow mosaic virus (isolate China/Yancheng/1998)</name>
    <name type="common">BaYMV</name>
    <dbReference type="NCBI Taxonomy" id="652104"/>
    <lineage>
        <taxon>Viruses</taxon>
        <taxon>Riboviria</taxon>
        <taxon>Orthornavirae</taxon>
        <taxon>Pisuviricota</taxon>
        <taxon>Stelpaviricetes</taxon>
        <taxon>Patatavirales</taxon>
        <taxon>Potyviridae</taxon>
        <taxon>Bymovirus</taxon>
        <taxon>Barley yellow mosaic virus</taxon>
    </lineage>
</organism>